<accession>A5D197</accession>
<reference key="1">
    <citation type="journal article" date="2008" name="Genome Res.">
        <title>The genome of Pelotomaculum thermopropionicum reveals niche-associated evolution in anaerobic microbiota.</title>
        <authorList>
            <person name="Kosaka T."/>
            <person name="Kato S."/>
            <person name="Shimoyama T."/>
            <person name="Ishii S."/>
            <person name="Abe T."/>
            <person name="Watanabe K."/>
        </authorList>
    </citation>
    <scope>NUCLEOTIDE SEQUENCE [LARGE SCALE GENOMIC DNA]</scope>
    <source>
        <strain>DSM 13744 / JCM 10971 / SI</strain>
    </source>
</reference>
<proteinExistence type="inferred from homology"/>
<comment type="function">
    <text evidence="1">Catalyzes the transfer of a ribosyl phosphate group from 5-phosphoribose 1-diphosphate to orotate, leading to the formation of orotidine monophosphate (OMP).</text>
</comment>
<comment type="catalytic activity">
    <reaction evidence="1">
        <text>orotidine 5'-phosphate + diphosphate = orotate + 5-phospho-alpha-D-ribose 1-diphosphate</text>
        <dbReference type="Rhea" id="RHEA:10380"/>
        <dbReference type="ChEBI" id="CHEBI:30839"/>
        <dbReference type="ChEBI" id="CHEBI:33019"/>
        <dbReference type="ChEBI" id="CHEBI:57538"/>
        <dbReference type="ChEBI" id="CHEBI:58017"/>
        <dbReference type="EC" id="2.4.2.10"/>
    </reaction>
</comment>
<comment type="cofactor">
    <cofactor evidence="1">
        <name>Mg(2+)</name>
        <dbReference type="ChEBI" id="CHEBI:18420"/>
    </cofactor>
</comment>
<comment type="pathway">
    <text evidence="1">Pyrimidine metabolism; UMP biosynthesis via de novo pathway; UMP from orotate: step 1/2.</text>
</comment>
<comment type="subunit">
    <text evidence="1">Homodimer.</text>
</comment>
<comment type="similarity">
    <text evidence="1">Belongs to the purine/pyrimidine phosphoribosyltransferase family. PyrE subfamily.</text>
</comment>
<protein>
    <recommendedName>
        <fullName evidence="1">Orotate phosphoribosyltransferase</fullName>
        <shortName evidence="1">OPRT</shortName>
        <shortName evidence="1">OPRTase</shortName>
        <ecNumber evidence="1">2.4.2.10</ecNumber>
    </recommendedName>
</protein>
<keyword id="KW-0328">Glycosyltransferase</keyword>
<keyword id="KW-0460">Magnesium</keyword>
<keyword id="KW-0665">Pyrimidine biosynthesis</keyword>
<keyword id="KW-1185">Reference proteome</keyword>
<keyword id="KW-0808">Transferase</keyword>
<evidence type="ECO:0000255" key="1">
    <source>
        <dbReference type="HAMAP-Rule" id="MF_01208"/>
    </source>
</evidence>
<gene>
    <name evidence="1" type="primary">pyrE</name>
    <name type="ordered locus">PTH_1804</name>
</gene>
<feature type="chain" id="PRO_1000138810" description="Orotate phosphoribosyltransferase">
    <location>
        <begin position="1"/>
        <end position="190"/>
    </location>
</feature>
<feature type="binding site" evidence="1">
    <location>
        <begin position="114"/>
        <end position="122"/>
    </location>
    <ligand>
        <name>5-phospho-alpha-D-ribose 1-diphosphate</name>
        <dbReference type="ChEBI" id="CHEBI:58017"/>
    </ligand>
</feature>
<feature type="binding site" evidence="1">
    <location>
        <position position="118"/>
    </location>
    <ligand>
        <name>orotate</name>
        <dbReference type="ChEBI" id="CHEBI:30839"/>
    </ligand>
</feature>
<feature type="binding site" evidence="1">
    <location>
        <position position="146"/>
    </location>
    <ligand>
        <name>orotate</name>
        <dbReference type="ChEBI" id="CHEBI:30839"/>
    </ligand>
</feature>
<organism>
    <name type="scientific">Pelotomaculum thermopropionicum (strain DSM 13744 / JCM 10971 / SI)</name>
    <dbReference type="NCBI Taxonomy" id="370438"/>
    <lineage>
        <taxon>Bacteria</taxon>
        <taxon>Bacillati</taxon>
        <taxon>Bacillota</taxon>
        <taxon>Clostridia</taxon>
        <taxon>Eubacteriales</taxon>
        <taxon>Desulfotomaculaceae</taxon>
        <taxon>Pelotomaculum</taxon>
    </lineage>
</organism>
<dbReference type="EC" id="2.4.2.10" evidence="1"/>
<dbReference type="EMBL" id="AP009389">
    <property type="protein sequence ID" value="BAF59985.1"/>
    <property type="molecule type" value="Genomic_DNA"/>
</dbReference>
<dbReference type="SMR" id="A5D197"/>
<dbReference type="STRING" id="370438.PTH_1804"/>
<dbReference type="KEGG" id="pth:PTH_1804"/>
<dbReference type="eggNOG" id="COG0461">
    <property type="taxonomic scope" value="Bacteria"/>
</dbReference>
<dbReference type="HOGENOM" id="CLU_074878_3_0_9"/>
<dbReference type="UniPathway" id="UPA00070">
    <property type="reaction ID" value="UER00119"/>
</dbReference>
<dbReference type="Proteomes" id="UP000006556">
    <property type="component" value="Chromosome"/>
</dbReference>
<dbReference type="GO" id="GO:0000287">
    <property type="term" value="F:magnesium ion binding"/>
    <property type="evidence" value="ECO:0007669"/>
    <property type="project" value="UniProtKB-UniRule"/>
</dbReference>
<dbReference type="GO" id="GO:0004588">
    <property type="term" value="F:orotate phosphoribosyltransferase activity"/>
    <property type="evidence" value="ECO:0007669"/>
    <property type="project" value="UniProtKB-UniRule"/>
</dbReference>
<dbReference type="GO" id="GO:0044205">
    <property type="term" value="P:'de novo' UMP biosynthetic process"/>
    <property type="evidence" value="ECO:0007669"/>
    <property type="project" value="UniProtKB-UniRule"/>
</dbReference>
<dbReference type="GO" id="GO:0019856">
    <property type="term" value="P:pyrimidine nucleobase biosynthetic process"/>
    <property type="evidence" value="ECO:0007669"/>
    <property type="project" value="InterPro"/>
</dbReference>
<dbReference type="CDD" id="cd06223">
    <property type="entry name" value="PRTases_typeI"/>
    <property type="match status" value="1"/>
</dbReference>
<dbReference type="Gene3D" id="3.40.50.2020">
    <property type="match status" value="1"/>
</dbReference>
<dbReference type="HAMAP" id="MF_01208">
    <property type="entry name" value="PyrE"/>
    <property type="match status" value="1"/>
</dbReference>
<dbReference type="InterPro" id="IPR023031">
    <property type="entry name" value="OPRT"/>
</dbReference>
<dbReference type="InterPro" id="IPR006273">
    <property type="entry name" value="Orotate_PRibTrfase_bac"/>
</dbReference>
<dbReference type="InterPro" id="IPR000836">
    <property type="entry name" value="PRibTrfase_dom"/>
</dbReference>
<dbReference type="InterPro" id="IPR029057">
    <property type="entry name" value="PRTase-like"/>
</dbReference>
<dbReference type="NCBIfam" id="TIGR01367">
    <property type="entry name" value="pyrE_Therm"/>
    <property type="match status" value="1"/>
</dbReference>
<dbReference type="PANTHER" id="PTHR19278">
    <property type="entry name" value="OROTATE PHOSPHORIBOSYLTRANSFERASE"/>
    <property type="match status" value="1"/>
</dbReference>
<dbReference type="PANTHER" id="PTHR19278:SF9">
    <property type="entry name" value="URIDINE 5'-MONOPHOSPHATE SYNTHASE"/>
    <property type="match status" value="1"/>
</dbReference>
<dbReference type="Pfam" id="PF00156">
    <property type="entry name" value="Pribosyltran"/>
    <property type="match status" value="1"/>
</dbReference>
<dbReference type="SUPFAM" id="SSF53271">
    <property type="entry name" value="PRTase-like"/>
    <property type="match status" value="1"/>
</dbReference>
<dbReference type="PROSITE" id="PS00103">
    <property type="entry name" value="PUR_PYR_PR_TRANSFER"/>
    <property type="match status" value="1"/>
</dbReference>
<sequence length="190" mass="20280">MTRDEIVAIFQKTGAMLSGHFRLTSGRHSNRYFQCALVLQHPDYSELLCRELAARFAGDGISVVIGPAMGGIIVSYEVARALGVRGLFAERENGVMTLRRGFSIEPGERVLVVEDVITTGGSVREVMEAVRKSGGTVAGAGVLVDRSNGAVDLGVRTEALLTAEVVSYAPEDCPFCKQGIPAVKPGSRKI</sequence>
<name>PYRE_PELTS</name>